<sequence>MRIVIYSMLVLLIAIQYPLWLGKGGWLKVYEMEKQVELQEAKNSLLALRNAKLEGDVKDLKDGTRAIEERARVEHGLIKEGEFFVQILPADQSSADTAKASTVKQ</sequence>
<feature type="chain" id="PRO_1000082455" description="Cell division protein FtsB">
    <location>
        <begin position="1"/>
        <end position="105"/>
    </location>
</feature>
<feature type="topological domain" description="Cytoplasmic" evidence="1">
    <location>
        <begin position="1"/>
        <end position="3"/>
    </location>
</feature>
<feature type="transmembrane region" description="Helical" evidence="1">
    <location>
        <begin position="4"/>
        <end position="21"/>
    </location>
</feature>
<feature type="topological domain" description="Periplasmic" evidence="1">
    <location>
        <begin position="22"/>
        <end position="105"/>
    </location>
</feature>
<feature type="coiled-coil region" evidence="1">
    <location>
        <begin position="32"/>
        <end position="60"/>
    </location>
</feature>
<organism>
    <name type="scientific">Polynucleobacter asymbioticus (strain DSM 18221 / CIP 109841 / QLW-P1DMWA-1)</name>
    <name type="common">Polynucleobacter necessarius subsp. asymbioticus</name>
    <dbReference type="NCBI Taxonomy" id="312153"/>
    <lineage>
        <taxon>Bacteria</taxon>
        <taxon>Pseudomonadati</taxon>
        <taxon>Pseudomonadota</taxon>
        <taxon>Betaproteobacteria</taxon>
        <taxon>Burkholderiales</taxon>
        <taxon>Burkholderiaceae</taxon>
        <taxon>Polynucleobacter</taxon>
    </lineage>
</organism>
<comment type="function">
    <text evidence="1">Essential cell division protein. May link together the upstream cell division proteins, which are predominantly cytoplasmic, with the downstream cell division proteins, which are predominantly periplasmic.</text>
</comment>
<comment type="subunit">
    <text evidence="1">Part of a complex composed of FtsB, FtsL and FtsQ.</text>
</comment>
<comment type="subcellular location">
    <subcellularLocation>
        <location evidence="1">Cell inner membrane</location>
        <topology evidence="1">Single-pass type II membrane protein</topology>
    </subcellularLocation>
    <text evidence="1">Localizes to the division septum.</text>
</comment>
<comment type="similarity">
    <text evidence="1">Belongs to the FtsB family.</text>
</comment>
<dbReference type="EMBL" id="CP000655">
    <property type="protein sequence ID" value="ABP34164.1"/>
    <property type="molecule type" value="Genomic_DNA"/>
</dbReference>
<dbReference type="RefSeq" id="WP_011902789.1">
    <property type="nucleotide sequence ID" value="NC_009379.1"/>
</dbReference>
<dbReference type="SMR" id="A4SXF0"/>
<dbReference type="GeneID" id="31481316"/>
<dbReference type="KEGG" id="pnu:Pnuc_0948"/>
<dbReference type="eggNOG" id="COG2919">
    <property type="taxonomic scope" value="Bacteria"/>
</dbReference>
<dbReference type="HOGENOM" id="CLU_134863_5_0_4"/>
<dbReference type="Proteomes" id="UP000000231">
    <property type="component" value="Chromosome"/>
</dbReference>
<dbReference type="GO" id="GO:0032153">
    <property type="term" value="C:cell division site"/>
    <property type="evidence" value="ECO:0007669"/>
    <property type="project" value="UniProtKB-UniRule"/>
</dbReference>
<dbReference type="GO" id="GO:0030428">
    <property type="term" value="C:cell septum"/>
    <property type="evidence" value="ECO:0007669"/>
    <property type="project" value="TreeGrafter"/>
</dbReference>
<dbReference type="GO" id="GO:0005886">
    <property type="term" value="C:plasma membrane"/>
    <property type="evidence" value="ECO:0007669"/>
    <property type="project" value="UniProtKB-SubCell"/>
</dbReference>
<dbReference type="GO" id="GO:0043093">
    <property type="term" value="P:FtsZ-dependent cytokinesis"/>
    <property type="evidence" value="ECO:0007669"/>
    <property type="project" value="UniProtKB-UniRule"/>
</dbReference>
<dbReference type="HAMAP" id="MF_00599">
    <property type="entry name" value="FtsB"/>
    <property type="match status" value="1"/>
</dbReference>
<dbReference type="InterPro" id="IPR023081">
    <property type="entry name" value="Cell_div_FtsB"/>
</dbReference>
<dbReference type="InterPro" id="IPR007060">
    <property type="entry name" value="FtsL/DivIC"/>
</dbReference>
<dbReference type="NCBIfam" id="NF002058">
    <property type="entry name" value="PRK00888.1"/>
    <property type="match status" value="1"/>
</dbReference>
<dbReference type="PANTHER" id="PTHR37485">
    <property type="entry name" value="CELL DIVISION PROTEIN FTSB"/>
    <property type="match status" value="1"/>
</dbReference>
<dbReference type="PANTHER" id="PTHR37485:SF1">
    <property type="entry name" value="CELL DIVISION PROTEIN FTSB"/>
    <property type="match status" value="1"/>
</dbReference>
<dbReference type="Pfam" id="PF04977">
    <property type="entry name" value="DivIC"/>
    <property type="match status" value="1"/>
</dbReference>
<name>FTSB_POLAQ</name>
<gene>
    <name evidence="1" type="primary">ftsB</name>
    <name type="ordered locus">Pnuc_0948</name>
</gene>
<evidence type="ECO:0000255" key="1">
    <source>
        <dbReference type="HAMAP-Rule" id="MF_00599"/>
    </source>
</evidence>
<accession>A4SXF0</accession>
<protein>
    <recommendedName>
        <fullName evidence="1">Cell division protein FtsB</fullName>
    </recommendedName>
</protein>
<reference key="1">
    <citation type="journal article" date="2012" name="Stand. Genomic Sci.">
        <title>Complete genome sequence of Polynucleobacter necessarius subsp. asymbioticus type strain (QLW-P1DMWA-1(T)).</title>
        <authorList>
            <person name="Meincke L."/>
            <person name="Copeland A."/>
            <person name="Lapidus A."/>
            <person name="Lucas S."/>
            <person name="Berry K.W."/>
            <person name="Del Rio T.G."/>
            <person name="Hammon N."/>
            <person name="Dalin E."/>
            <person name="Tice H."/>
            <person name="Pitluck S."/>
            <person name="Richardson P."/>
            <person name="Bruce D."/>
            <person name="Goodwin L."/>
            <person name="Han C."/>
            <person name="Tapia R."/>
            <person name="Detter J.C."/>
            <person name="Schmutz J."/>
            <person name="Brettin T."/>
            <person name="Larimer F."/>
            <person name="Land M."/>
            <person name="Hauser L."/>
            <person name="Kyrpides N.C."/>
            <person name="Ivanova N."/>
            <person name="Goker M."/>
            <person name="Woyke T."/>
            <person name="Wu Q.L."/>
            <person name="Pockl M."/>
            <person name="Hahn M.W."/>
            <person name="Klenk H.P."/>
        </authorList>
    </citation>
    <scope>NUCLEOTIDE SEQUENCE [LARGE SCALE GENOMIC DNA]</scope>
    <source>
        <strain>DSM 18221 / CIP 109841 / QLW-P1DMWA-1</strain>
    </source>
</reference>
<keyword id="KW-0131">Cell cycle</keyword>
<keyword id="KW-0132">Cell division</keyword>
<keyword id="KW-0997">Cell inner membrane</keyword>
<keyword id="KW-1003">Cell membrane</keyword>
<keyword id="KW-0175">Coiled coil</keyword>
<keyword id="KW-0472">Membrane</keyword>
<keyword id="KW-1185">Reference proteome</keyword>
<keyword id="KW-0812">Transmembrane</keyword>
<keyword id="KW-1133">Transmembrane helix</keyword>
<proteinExistence type="inferred from homology"/>